<organism>
    <name type="scientific">Natronomonas pharaonis (strain ATCC 35678 / DSM 2160 / CIP 103997 / JCM 8858 / NBRC 14720 / NCIMB 2260 / Gabara)</name>
    <name type="common">Halobacterium pharaonis</name>
    <dbReference type="NCBI Taxonomy" id="348780"/>
    <lineage>
        <taxon>Archaea</taxon>
        <taxon>Methanobacteriati</taxon>
        <taxon>Methanobacteriota</taxon>
        <taxon>Stenosarchaea group</taxon>
        <taxon>Halobacteria</taxon>
        <taxon>Halobacteriales</taxon>
        <taxon>Haloarculaceae</taxon>
        <taxon>Natronomonas</taxon>
    </lineage>
</organism>
<comment type="function">
    <text evidence="1">Catalyzes the reversible conversion of ribose-5-phosphate to ribulose 5-phosphate.</text>
</comment>
<comment type="catalytic activity">
    <reaction evidence="1">
        <text>aldehydo-D-ribose 5-phosphate = D-ribulose 5-phosphate</text>
        <dbReference type="Rhea" id="RHEA:14657"/>
        <dbReference type="ChEBI" id="CHEBI:58121"/>
        <dbReference type="ChEBI" id="CHEBI:58273"/>
        <dbReference type="EC" id="5.3.1.6"/>
    </reaction>
</comment>
<comment type="pathway">
    <text evidence="1">Carbohydrate degradation; pentose phosphate pathway; D-ribose 5-phosphate from D-ribulose 5-phosphate (non-oxidative stage): step 1/1.</text>
</comment>
<comment type="subunit">
    <text evidence="1">Homodimer.</text>
</comment>
<comment type="similarity">
    <text evidence="1">Belongs to the ribose 5-phosphate isomerase family.</text>
</comment>
<reference key="1">
    <citation type="journal article" date="2005" name="Genome Res.">
        <title>Living with two extremes: conclusions from the genome sequence of Natronomonas pharaonis.</title>
        <authorList>
            <person name="Falb M."/>
            <person name="Pfeiffer F."/>
            <person name="Palm P."/>
            <person name="Rodewald K."/>
            <person name="Hickmann V."/>
            <person name="Tittor J."/>
            <person name="Oesterhelt D."/>
        </authorList>
    </citation>
    <scope>NUCLEOTIDE SEQUENCE [LARGE SCALE GENOMIC DNA]</scope>
    <source>
        <strain>ATCC 35678 / DSM 2160 / CIP 103997 / JCM 8858 / NBRC 14720 / NCIMB 2260 / Gabara</strain>
    </source>
</reference>
<accession>Q3ITP9</accession>
<protein>
    <recommendedName>
        <fullName evidence="1">Ribose-5-phosphate isomerase A</fullName>
        <ecNumber evidence="1">5.3.1.6</ecNumber>
    </recommendedName>
    <alternativeName>
        <fullName evidence="1">Phosphoriboisomerase A</fullName>
        <shortName evidence="1">PRI</shortName>
    </alternativeName>
</protein>
<dbReference type="EC" id="5.3.1.6" evidence="1"/>
<dbReference type="EMBL" id="CR936257">
    <property type="protein sequence ID" value="CAI48484.1"/>
    <property type="molecule type" value="Genomic_DNA"/>
</dbReference>
<dbReference type="RefSeq" id="WP_011322120.1">
    <property type="nucleotide sequence ID" value="NC_007426.1"/>
</dbReference>
<dbReference type="SMR" id="Q3ITP9"/>
<dbReference type="STRING" id="348780.NP_0786A"/>
<dbReference type="EnsemblBacteria" id="CAI48484">
    <property type="protein sequence ID" value="CAI48484"/>
    <property type="gene ID" value="NP_0786A"/>
</dbReference>
<dbReference type="GeneID" id="3703117"/>
<dbReference type="KEGG" id="nph:NP_0786A"/>
<dbReference type="eggNOG" id="arCOG01122">
    <property type="taxonomic scope" value="Archaea"/>
</dbReference>
<dbReference type="HOGENOM" id="CLU_056590_1_0_2"/>
<dbReference type="OrthoDB" id="19013at2157"/>
<dbReference type="UniPathway" id="UPA00115">
    <property type="reaction ID" value="UER00412"/>
</dbReference>
<dbReference type="Proteomes" id="UP000002698">
    <property type="component" value="Chromosome"/>
</dbReference>
<dbReference type="GO" id="GO:0005829">
    <property type="term" value="C:cytosol"/>
    <property type="evidence" value="ECO:0007669"/>
    <property type="project" value="TreeGrafter"/>
</dbReference>
<dbReference type="GO" id="GO:0004751">
    <property type="term" value="F:ribose-5-phosphate isomerase activity"/>
    <property type="evidence" value="ECO:0007669"/>
    <property type="project" value="UniProtKB-UniRule"/>
</dbReference>
<dbReference type="GO" id="GO:0006014">
    <property type="term" value="P:D-ribose metabolic process"/>
    <property type="evidence" value="ECO:0007669"/>
    <property type="project" value="TreeGrafter"/>
</dbReference>
<dbReference type="GO" id="GO:0009052">
    <property type="term" value="P:pentose-phosphate shunt, non-oxidative branch"/>
    <property type="evidence" value="ECO:0007669"/>
    <property type="project" value="UniProtKB-UniRule"/>
</dbReference>
<dbReference type="CDD" id="cd01398">
    <property type="entry name" value="RPI_A"/>
    <property type="match status" value="1"/>
</dbReference>
<dbReference type="FunFam" id="3.30.70.260:FF:000018">
    <property type="entry name" value="Ribose-5-phosphate isomerase A"/>
    <property type="match status" value="1"/>
</dbReference>
<dbReference type="FunFam" id="3.40.50.1360:FF:000001">
    <property type="entry name" value="Ribose-5-phosphate isomerase A"/>
    <property type="match status" value="1"/>
</dbReference>
<dbReference type="Gene3D" id="3.30.70.260">
    <property type="match status" value="1"/>
</dbReference>
<dbReference type="Gene3D" id="3.40.50.1360">
    <property type="match status" value="1"/>
</dbReference>
<dbReference type="HAMAP" id="MF_00170">
    <property type="entry name" value="Rib_5P_isom_A"/>
    <property type="match status" value="1"/>
</dbReference>
<dbReference type="InterPro" id="IPR037171">
    <property type="entry name" value="NagB/RpiA_transferase-like"/>
</dbReference>
<dbReference type="InterPro" id="IPR020672">
    <property type="entry name" value="Ribose5P_isomerase_typA_subgr"/>
</dbReference>
<dbReference type="InterPro" id="IPR004788">
    <property type="entry name" value="Ribose5P_isomerase_type_A"/>
</dbReference>
<dbReference type="NCBIfam" id="NF001924">
    <property type="entry name" value="PRK00702.1"/>
    <property type="match status" value="1"/>
</dbReference>
<dbReference type="NCBIfam" id="TIGR00021">
    <property type="entry name" value="rpiA"/>
    <property type="match status" value="1"/>
</dbReference>
<dbReference type="PANTHER" id="PTHR11934">
    <property type="entry name" value="RIBOSE-5-PHOSPHATE ISOMERASE"/>
    <property type="match status" value="1"/>
</dbReference>
<dbReference type="PANTHER" id="PTHR11934:SF0">
    <property type="entry name" value="RIBOSE-5-PHOSPHATE ISOMERASE"/>
    <property type="match status" value="1"/>
</dbReference>
<dbReference type="Pfam" id="PF06026">
    <property type="entry name" value="Rib_5-P_isom_A"/>
    <property type="match status" value="1"/>
</dbReference>
<dbReference type="SUPFAM" id="SSF75445">
    <property type="entry name" value="D-ribose-5-phosphate isomerase (RpiA), lid domain"/>
    <property type="match status" value="1"/>
</dbReference>
<dbReference type="SUPFAM" id="SSF100950">
    <property type="entry name" value="NagB/RpiA/CoA transferase-like"/>
    <property type="match status" value="1"/>
</dbReference>
<keyword id="KW-0413">Isomerase</keyword>
<keyword id="KW-1185">Reference proteome</keyword>
<proteinExistence type="inferred from homology"/>
<name>RPIA_NATPD</name>
<evidence type="ECO:0000255" key="1">
    <source>
        <dbReference type="HAMAP-Rule" id="MF_00170"/>
    </source>
</evidence>
<evidence type="ECO:0000256" key="2">
    <source>
        <dbReference type="SAM" id="MobiDB-lite"/>
    </source>
</evidence>
<feature type="chain" id="PRO_1000016951" description="Ribose-5-phosphate isomerase A">
    <location>
        <begin position="1"/>
        <end position="225"/>
    </location>
</feature>
<feature type="region of interest" description="Disordered" evidence="2">
    <location>
        <begin position="1"/>
        <end position="20"/>
    </location>
</feature>
<feature type="active site" description="Proton acceptor" evidence="1">
    <location>
        <position position="107"/>
    </location>
</feature>
<feature type="binding site" evidence="1">
    <location>
        <begin position="32"/>
        <end position="35"/>
    </location>
    <ligand>
        <name>substrate</name>
    </ligand>
</feature>
<feature type="binding site" evidence="1">
    <location>
        <begin position="86"/>
        <end position="89"/>
    </location>
    <ligand>
        <name>substrate</name>
    </ligand>
</feature>
<feature type="binding site" evidence="1">
    <location>
        <begin position="98"/>
        <end position="101"/>
    </location>
    <ligand>
        <name>substrate</name>
    </ligand>
</feature>
<feature type="binding site" evidence="1">
    <location>
        <position position="125"/>
    </location>
    <ligand>
        <name>substrate</name>
    </ligand>
</feature>
<sequence length="225" mass="23088">MKQSGGTEAQKRRAGKQAADAVEDGMVVGLGTGSTAAASIRELGQRVEEGLDIRGIPTSYQSRQLAREADIPLTTLEEATPDVAIDGADQVAAGDLIKGGGAAHAREKLVDAAADRFLVVADETKLSPTLDIPVPVEVLPDAAPVVQRQVAALGGEPTLRAAERKDGPVVTDNGNLVIDCAFGEIAEPAALAEELSALPGAVEHGLFVGLADEILVGTDDGVDVR</sequence>
<gene>
    <name evidence="1" type="primary">rpiA</name>
    <name type="ordered locus">NP_0786A</name>
</gene>